<accession>P78847</accession>
<accession>Q1L847</accession>
<protein>
    <recommendedName>
        <fullName>Nucleoporin nup186</fullName>
    </recommendedName>
    <alternativeName>
        <fullName>Nuclear pore protein nup186</fullName>
    </alternativeName>
</protein>
<keyword id="KW-0963">Cytoplasm</keyword>
<keyword id="KW-0539">Nucleus</keyword>
<keyword id="KW-1185">Reference proteome</keyword>
<keyword id="KW-0813">Transport</keyword>
<comment type="function">
    <text evidence="1">Functions as a component of the nuclear pore complex (NPC). NPC components, collectively referred to as nucleoporins (NUPs), can play the role of both NPC structural components and of docking or interaction partners for transiently associated nuclear transport factors. Active directional transport is assured by both, a Phe-Gly (FG) repeat affinity gradient for these transport factors across the NPC and a transport cofactor concentration gradient across the nuclear envelope.</text>
</comment>
<comment type="subcellular location">
    <subcellularLocation>
        <location>Cytoplasm</location>
    </subcellularLocation>
    <subcellularLocation>
        <location>Nucleus</location>
    </subcellularLocation>
    <text>Nuclear rim.</text>
</comment>
<comment type="similarity">
    <text evidence="2">Belongs to the NUP186/NUP192/NUP205 family.</text>
</comment>
<organism>
    <name type="scientific">Schizosaccharomyces pombe (strain 972 / ATCC 24843)</name>
    <name type="common">Fission yeast</name>
    <dbReference type="NCBI Taxonomy" id="284812"/>
    <lineage>
        <taxon>Eukaryota</taxon>
        <taxon>Fungi</taxon>
        <taxon>Dikarya</taxon>
        <taxon>Ascomycota</taxon>
        <taxon>Taphrinomycotina</taxon>
        <taxon>Schizosaccharomycetes</taxon>
        <taxon>Schizosaccharomycetales</taxon>
        <taxon>Schizosaccharomycetaceae</taxon>
        <taxon>Schizosaccharomyces</taxon>
    </lineage>
</organism>
<name>NU186_SCHPO</name>
<gene>
    <name type="primary">nup186</name>
    <name type="ORF">SPCC290.03c</name>
</gene>
<sequence length="1647" mass="186412">MDVWESQHFSALLYLLQCIESNPSNPNVSSRLLIQCLESYSKDFLKFLALDPANANSRKKLESGEVELGGVINKVNEQFIQLSLTLSTQLNLDEIQCASLLQRGIEASQNLDRTPVQAALYFFFLAREQLLECLESLTRVVGLKDLESDISTALKSYLQSLCENGNNLVKTCIDTIPILDNKVSEILKSEAGGQILGVSEVVDFQEFIRLSHEAHVAELETISVILYQLAKVDLFQNSHFESLLVMLRKYDSPNKNAVLILPTLYAFIDKVLEVEYLPDQKVQLRSNSVEILQKIHQAIIQSPSQDWRSSQFKNILGIWWVTRLNATCKQIEKVPSFIDYETTIKNAANEIIQNGVFSDMITLLVYPFRQSETEGMEWAFAFKSRSRITVNWSLIRPFIASIIFSELRSFAQAFVSYMPDILKTLRLLEEDRYLTNTTYPTSIPGEQIEEYFPFEEFYYLLSSIYTYNVSWISDFWDDIESDMYGFLTWSMGSQIPGIITAFTLLLASLCKNTTSASKIYELFSEPIPEVGHLESLMITSPSWSYIFNVFRYYISHLKPVQTVVTSSGLARVHTDPSEIDTDSALILQAYILLFSSVVRQDAQIASTFCENQDLNPIATLFELLECRLPDSVRICIVRALESLAHLSTGSFNNALWTALDNWFVSSVLFDVDGGLAPMSIPAISKRSLTKPVTSCGPLLNNIRRLTVNLEMKISFVNLLTSLTRNKSELNVNLTFPENLGASYRTPGVQPYVDYVVETFVASSTQWRLMRDVGSIRLQYACLQYMLAVLDGLNIDLLLYSRILSSKVRDNLQNNNLHVYLTRHPAISLLEALYTESVYSGLFDLVEYGFDQLEDVSVPKTIVITVSASLCILRNVLSLQRVLFKNVVPYIAELGISKYILDLTISRRAYKEVFMTRISSIVHLALLVGSRHKCFLRSAIEILSYLVDAEGFMNKRNPDENKLLCSIIRTANESKRIIFGFIRTFESQFLTLLSTNDESSLILKLLLNNLKQSGGVYSLALLILGFDISSTNVITLRDQPGYVGSRVSLMNSLLDFIEGRTIVNGIWETPVIMVQALEIVAFLCSCPLTSEVTLSVIRARPGLLVKMVDGEPILTQQVIQNLGGFSSEEVSMVSRCIRSRTQIMNMLATEIHYAASVGQNKYLNEYVASLIRTNEKTHSTELSQKESGFKILEFMDILRIDPQSITFELPNIPGFNLNMFITRFDRGHSDFQFDTERVLKIYRLFFEAEMTSLGGSAEEKYSWLEQQNSKLKELAQRLNTFNAHVVLLQDIHGCLTAWARLTGLLVDDCNEVISDVHFDDFIWEVLRLVLPGVTVHNLGTQGTVSVTSSVIETILPHALRRIGALKPEELGKSTYFMEGIHDVIVGLLKGIQCQQSDESIRENLYGSLLSILTVFQKHTSANGGDKVDPVFKDAFQKLITPNLLTSQFFDVLTKDALYTNGSCWELSVIILNFLHHVSPDISTHLYKYYLRRNFVSSFIDAFSRAFSELLSSNKDVLEVLSGLEAGQCLLITFAQNKLTVHSVLTFDYIKLMVQMLLQLCKQGGIQYLKPPVQRLMIQLLQIFILVLMRVTLKEISNKDKLLLQSIFLLSRKLQDSVQTGADQALSPEMNTVKKYVETISRLLDLYRD</sequence>
<proteinExistence type="evidence at transcript level"/>
<evidence type="ECO:0000269" key="1">
    <source>
    </source>
</evidence>
<evidence type="ECO:0000305" key="2"/>
<reference key="1">
    <citation type="journal article" date="2002" name="Nature">
        <title>The genome sequence of Schizosaccharomyces pombe.</title>
        <authorList>
            <person name="Wood V."/>
            <person name="Gwilliam R."/>
            <person name="Rajandream M.A."/>
            <person name="Lyne M.H."/>
            <person name="Lyne R."/>
            <person name="Stewart A."/>
            <person name="Sgouros J.G."/>
            <person name="Peat N."/>
            <person name="Hayles J."/>
            <person name="Baker S.G."/>
            <person name="Basham D."/>
            <person name="Bowman S."/>
            <person name="Brooks K."/>
            <person name="Brown D."/>
            <person name="Brown S."/>
            <person name="Chillingworth T."/>
            <person name="Churcher C.M."/>
            <person name="Collins M."/>
            <person name="Connor R."/>
            <person name="Cronin A."/>
            <person name="Davis P."/>
            <person name="Feltwell T."/>
            <person name="Fraser A."/>
            <person name="Gentles S."/>
            <person name="Goble A."/>
            <person name="Hamlin N."/>
            <person name="Harris D.E."/>
            <person name="Hidalgo J."/>
            <person name="Hodgson G."/>
            <person name="Holroyd S."/>
            <person name="Hornsby T."/>
            <person name="Howarth S."/>
            <person name="Huckle E.J."/>
            <person name="Hunt S."/>
            <person name="Jagels K."/>
            <person name="James K.D."/>
            <person name="Jones L."/>
            <person name="Jones M."/>
            <person name="Leather S."/>
            <person name="McDonald S."/>
            <person name="McLean J."/>
            <person name="Mooney P."/>
            <person name="Moule S."/>
            <person name="Mungall K.L."/>
            <person name="Murphy L.D."/>
            <person name="Niblett D."/>
            <person name="Odell C."/>
            <person name="Oliver K."/>
            <person name="O'Neil S."/>
            <person name="Pearson D."/>
            <person name="Quail M.A."/>
            <person name="Rabbinowitsch E."/>
            <person name="Rutherford K.M."/>
            <person name="Rutter S."/>
            <person name="Saunders D."/>
            <person name="Seeger K."/>
            <person name="Sharp S."/>
            <person name="Skelton J."/>
            <person name="Simmonds M.N."/>
            <person name="Squares R."/>
            <person name="Squares S."/>
            <person name="Stevens K."/>
            <person name="Taylor K."/>
            <person name="Taylor R.G."/>
            <person name="Tivey A."/>
            <person name="Walsh S.V."/>
            <person name="Warren T."/>
            <person name="Whitehead S."/>
            <person name="Woodward J.R."/>
            <person name="Volckaert G."/>
            <person name="Aert R."/>
            <person name="Robben J."/>
            <person name="Grymonprez B."/>
            <person name="Weltjens I."/>
            <person name="Vanstreels E."/>
            <person name="Rieger M."/>
            <person name="Schaefer M."/>
            <person name="Mueller-Auer S."/>
            <person name="Gabel C."/>
            <person name="Fuchs M."/>
            <person name="Duesterhoeft A."/>
            <person name="Fritzc C."/>
            <person name="Holzer E."/>
            <person name="Moestl D."/>
            <person name="Hilbert H."/>
            <person name="Borzym K."/>
            <person name="Langer I."/>
            <person name="Beck A."/>
            <person name="Lehrach H."/>
            <person name="Reinhardt R."/>
            <person name="Pohl T.M."/>
            <person name="Eger P."/>
            <person name="Zimmermann W."/>
            <person name="Wedler H."/>
            <person name="Wambutt R."/>
            <person name="Purnelle B."/>
            <person name="Goffeau A."/>
            <person name="Cadieu E."/>
            <person name="Dreano S."/>
            <person name="Gloux S."/>
            <person name="Lelaure V."/>
            <person name="Mottier S."/>
            <person name="Galibert F."/>
            <person name="Aves S.J."/>
            <person name="Xiang Z."/>
            <person name="Hunt C."/>
            <person name="Moore K."/>
            <person name="Hurst S.M."/>
            <person name="Lucas M."/>
            <person name="Rochet M."/>
            <person name="Gaillardin C."/>
            <person name="Tallada V.A."/>
            <person name="Garzon A."/>
            <person name="Thode G."/>
            <person name="Daga R.R."/>
            <person name="Cruzado L."/>
            <person name="Jimenez J."/>
            <person name="Sanchez M."/>
            <person name="del Rey F."/>
            <person name="Benito J."/>
            <person name="Dominguez A."/>
            <person name="Revuelta J.L."/>
            <person name="Moreno S."/>
            <person name="Armstrong J."/>
            <person name="Forsburg S.L."/>
            <person name="Cerutti L."/>
            <person name="Lowe T."/>
            <person name="McCombie W.R."/>
            <person name="Paulsen I."/>
            <person name="Potashkin J."/>
            <person name="Shpakovski G.V."/>
            <person name="Ussery D."/>
            <person name="Barrell B.G."/>
            <person name="Nurse P."/>
        </authorList>
    </citation>
    <scope>NUCLEOTIDE SEQUENCE [LARGE SCALE GENOMIC DNA]</scope>
    <source>
        <strain>972 / ATCC 24843</strain>
    </source>
</reference>
<reference key="2">
    <citation type="journal article" date="1997" name="DNA Res.">
        <title>Identification of open reading frames in Schizosaccharomyces pombe cDNAs.</title>
        <authorList>
            <person name="Yoshioka S."/>
            <person name="Kato K."/>
            <person name="Nakai K."/>
            <person name="Okayama H."/>
            <person name="Nojima H."/>
        </authorList>
    </citation>
    <scope>NUCLEOTIDE SEQUENCE [LARGE SCALE MRNA] OF 1320-1647</scope>
    <source>
        <strain>PR745</strain>
    </source>
</reference>
<reference key="3">
    <citation type="journal article" date="2004" name="Yeast">
        <title>Identification of genes encoding putative nucleoporins and transport factors in the fission yeast Schizosaccharomyces pombe: a deletion analysis.</title>
        <authorList>
            <person name="Chen X.Q."/>
            <person name="Du X."/>
            <person name="Liu J."/>
            <person name="Balasubramanian M.K."/>
            <person name="Balasundaram D."/>
        </authorList>
    </citation>
    <scope>FUNCTION</scope>
    <scope>SUBCELLULAR LOCATION</scope>
</reference>
<reference key="4">
    <citation type="journal article" date="2006" name="Nat. Biotechnol.">
        <title>ORFeome cloning and global analysis of protein localization in the fission yeast Schizosaccharomyces pombe.</title>
        <authorList>
            <person name="Matsuyama A."/>
            <person name="Arai R."/>
            <person name="Yashiroda Y."/>
            <person name="Shirai A."/>
            <person name="Kamata A."/>
            <person name="Sekido S."/>
            <person name="Kobayashi Y."/>
            <person name="Hashimoto A."/>
            <person name="Hamamoto M."/>
            <person name="Hiraoka Y."/>
            <person name="Horinouchi S."/>
            <person name="Yoshida M."/>
        </authorList>
    </citation>
    <scope>SUBCELLULAR LOCATION [LARGE SCALE ANALYSIS]</scope>
</reference>
<dbReference type="EMBL" id="CU329672">
    <property type="protein sequence ID" value="CAA22873.1"/>
    <property type="molecule type" value="Genomic_DNA"/>
</dbReference>
<dbReference type="EMBL" id="D89197">
    <property type="protein sequence ID" value="BAA13858.1"/>
    <property type="molecule type" value="mRNA"/>
</dbReference>
<dbReference type="PIR" id="T41267">
    <property type="entry name" value="T41267"/>
</dbReference>
<dbReference type="PIR" id="T42996">
    <property type="entry name" value="T42996"/>
</dbReference>
<dbReference type="RefSeq" id="NP_588399.1">
    <property type="nucleotide sequence ID" value="NM_001023390.2"/>
</dbReference>
<dbReference type="SMR" id="P78847"/>
<dbReference type="BioGRID" id="275337">
    <property type="interactions" value="1"/>
</dbReference>
<dbReference type="FunCoup" id="P78847">
    <property type="interactions" value="587"/>
</dbReference>
<dbReference type="STRING" id="284812.P78847"/>
<dbReference type="PaxDb" id="4896-SPCC290.03c.1"/>
<dbReference type="EnsemblFungi" id="SPCC290.03c.1">
    <property type="protein sequence ID" value="SPCC290.03c.1:pep"/>
    <property type="gene ID" value="SPCC290.03c"/>
</dbReference>
<dbReference type="GeneID" id="2538754"/>
<dbReference type="KEGG" id="spo:2538754"/>
<dbReference type="PomBase" id="SPCC290.03c">
    <property type="gene designation" value="nup186"/>
</dbReference>
<dbReference type="VEuPathDB" id="FungiDB:SPCC290.03c"/>
<dbReference type="eggNOG" id="KOG1835">
    <property type="taxonomic scope" value="Eukaryota"/>
</dbReference>
<dbReference type="HOGENOM" id="CLU_001071_0_0_1"/>
<dbReference type="InParanoid" id="P78847"/>
<dbReference type="OMA" id="AYGFIEW"/>
<dbReference type="PhylomeDB" id="P78847"/>
<dbReference type="Reactome" id="R-SPO-159227">
    <property type="pathway name" value="Transport of the SLBP independent Mature mRNA"/>
</dbReference>
<dbReference type="Reactome" id="R-SPO-159231">
    <property type="pathway name" value="Transport of Mature mRNA Derived from an Intronless Transcript"/>
</dbReference>
<dbReference type="Reactome" id="R-SPO-159236">
    <property type="pathway name" value="Transport of Mature mRNA derived from an Intron-Containing Transcript"/>
</dbReference>
<dbReference type="Reactome" id="R-SPO-3371453">
    <property type="pathway name" value="Regulation of HSF1-mediated heat shock response"/>
</dbReference>
<dbReference type="Reactome" id="R-SPO-4085377">
    <property type="pathway name" value="SUMOylation of SUMOylation proteins"/>
</dbReference>
<dbReference type="Reactome" id="R-SPO-4551638">
    <property type="pathway name" value="SUMOylation of chromatin organization proteins"/>
</dbReference>
<dbReference type="Reactome" id="R-SPO-4570464">
    <property type="pathway name" value="SUMOylation of RNA binding proteins"/>
</dbReference>
<dbReference type="Reactome" id="R-SPO-5578749">
    <property type="pathway name" value="Transcriptional regulation by small RNAs"/>
</dbReference>
<dbReference type="Reactome" id="R-SPO-9615933">
    <property type="pathway name" value="Postmitotic nuclear pore complex (NPC) reformation"/>
</dbReference>
<dbReference type="PRO" id="PR:P78847"/>
<dbReference type="Proteomes" id="UP000002485">
    <property type="component" value="Chromosome III"/>
</dbReference>
<dbReference type="GO" id="GO:0005829">
    <property type="term" value="C:cytosol"/>
    <property type="evidence" value="ECO:0007005"/>
    <property type="project" value="PomBase"/>
</dbReference>
<dbReference type="GO" id="GO:0005635">
    <property type="term" value="C:nuclear envelope"/>
    <property type="evidence" value="ECO:0007005"/>
    <property type="project" value="PomBase"/>
</dbReference>
<dbReference type="GO" id="GO:0034399">
    <property type="term" value="C:nuclear periphery"/>
    <property type="evidence" value="ECO:0000314"/>
    <property type="project" value="PomBase"/>
</dbReference>
<dbReference type="GO" id="GO:0005643">
    <property type="term" value="C:nuclear pore"/>
    <property type="evidence" value="ECO:0000314"/>
    <property type="project" value="PomBase"/>
</dbReference>
<dbReference type="GO" id="GO:0044611">
    <property type="term" value="C:nuclear pore inner ring"/>
    <property type="evidence" value="ECO:0000318"/>
    <property type="project" value="GO_Central"/>
</dbReference>
<dbReference type="GO" id="GO:0005634">
    <property type="term" value="C:nucleus"/>
    <property type="evidence" value="ECO:0007005"/>
    <property type="project" value="PomBase"/>
</dbReference>
<dbReference type="GO" id="GO:0017056">
    <property type="term" value="F:structural constituent of nuclear pore"/>
    <property type="evidence" value="ECO:0000318"/>
    <property type="project" value="GO_Central"/>
</dbReference>
<dbReference type="GO" id="GO:0006999">
    <property type="term" value="P:nuclear pore organization"/>
    <property type="evidence" value="ECO:0000318"/>
    <property type="project" value="GO_Central"/>
</dbReference>
<dbReference type="GO" id="GO:0006913">
    <property type="term" value="P:nucleocytoplasmic transport"/>
    <property type="evidence" value="ECO:0000266"/>
    <property type="project" value="PomBase"/>
</dbReference>
<dbReference type="InterPro" id="IPR021827">
    <property type="entry name" value="Nup186/Nup192/Nup205"/>
</dbReference>
<dbReference type="PANTHER" id="PTHR31344">
    <property type="entry name" value="NUCLEAR PORE COMPLEX PROTEIN NUP205"/>
    <property type="match status" value="1"/>
</dbReference>
<dbReference type="PANTHER" id="PTHR31344:SF0">
    <property type="entry name" value="NUCLEAR PORE COMPLEX PROTEIN NUP205"/>
    <property type="match status" value="1"/>
</dbReference>
<dbReference type="Pfam" id="PF11894">
    <property type="entry name" value="Nup192"/>
    <property type="match status" value="1"/>
</dbReference>
<feature type="chain" id="PRO_0000290670" description="Nucleoporin nup186">
    <location>
        <begin position="1"/>
        <end position="1647"/>
    </location>
</feature>